<sequence>MLPKYYQNLPYNGKRIFEKFYDRSLQKYKSTQIATKLACCAVRKKYMLIDGKWQPRPDANNSDTTTSTEDSTTDTETEYSTTEDELA</sequence>
<organism>
    <name type="scientific">Autographa californica nuclear polyhedrosis virus</name>
    <name type="common">AcMNPV</name>
    <dbReference type="NCBI Taxonomy" id="46015"/>
    <lineage>
        <taxon>Viruses</taxon>
        <taxon>Viruses incertae sedis</taxon>
        <taxon>Naldaviricetes</taxon>
        <taxon>Lefavirales</taxon>
        <taxon>Baculoviridae</taxon>
        <taxon>Alphabaculovirus</taxon>
        <taxon>Alphabaculovirus aucalifornicae</taxon>
    </lineage>
</organism>
<keyword id="KW-1185">Reference proteome</keyword>
<evidence type="ECO:0000256" key="1">
    <source>
        <dbReference type="SAM" id="MobiDB-lite"/>
    </source>
</evidence>
<reference key="1">
    <citation type="journal article" date="1994" name="Virology">
        <title>The complete DNA sequence of Autographa californica nuclear polyhedrosis virus.</title>
        <authorList>
            <person name="Ayres M.D."/>
            <person name="Howard S.C."/>
            <person name="Kuzio J."/>
            <person name="Lopez-Ferber M."/>
            <person name="Possee R.D."/>
        </authorList>
    </citation>
    <scope>NUCLEOTIDE SEQUENCE [LARGE SCALE GENOMIC DNA]</scope>
    <source>
        <strain>C6</strain>
    </source>
</reference>
<feature type="chain" id="PRO_0000132999" description="Uncharacterized 10.1 kDa protein in LEF8-FP intergenic region">
    <location>
        <begin position="1"/>
        <end position="87"/>
    </location>
</feature>
<feature type="region of interest" description="Disordered" evidence="1">
    <location>
        <begin position="52"/>
        <end position="87"/>
    </location>
</feature>
<feature type="compositionally biased region" description="Acidic residues" evidence="1">
    <location>
        <begin position="71"/>
        <end position="87"/>
    </location>
</feature>
<protein>
    <recommendedName>
        <fullName>Uncharacterized 10.1 kDa protein in LEF8-FP intergenic region</fullName>
    </recommendedName>
</protein>
<dbReference type="EMBL" id="L22858">
    <property type="protein sequence ID" value="AAA66690.1"/>
    <property type="molecule type" value="Genomic_DNA"/>
</dbReference>
<dbReference type="PIR" id="E72857">
    <property type="entry name" value="E72857"/>
</dbReference>
<dbReference type="RefSeq" id="NP_054090.1">
    <property type="nucleotide sequence ID" value="NC_001623.1"/>
</dbReference>
<dbReference type="SMR" id="P41464"/>
<dbReference type="GeneID" id="1403893"/>
<dbReference type="KEGG" id="vg:1403893"/>
<dbReference type="OrthoDB" id="27883at10239"/>
<dbReference type="Proteomes" id="UP000008292">
    <property type="component" value="Segment"/>
</dbReference>
<dbReference type="Gene3D" id="1.10.1740.70">
    <property type="entry name" value="ChaB"/>
    <property type="match status" value="1"/>
</dbReference>
<dbReference type="InterPro" id="IPR009317">
    <property type="entry name" value="ChaB"/>
</dbReference>
<dbReference type="InterPro" id="IPR037205">
    <property type="entry name" value="ChaB_sf"/>
</dbReference>
<dbReference type="Pfam" id="PF06150">
    <property type="entry name" value="ChaB"/>
    <property type="match status" value="1"/>
</dbReference>
<dbReference type="SUPFAM" id="SSF140376">
    <property type="entry name" value="ChaB-like"/>
    <property type="match status" value="1"/>
</dbReference>
<organismHost>
    <name type="scientific">Lepidoptera</name>
    <name type="common">butterflies and moths</name>
    <dbReference type="NCBI Taxonomy" id="7088"/>
</organismHost>
<proteinExistence type="predicted"/>
<accession>P41464</accession>
<name>Y060_NPVAC</name>